<organism>
    <name type="scientific">Bordetella bronchiseptica (strain ATCC BAA-588 / NCTC 13252 / RB50)</name>
    <name type="common">Alcaligenes bronchisepticus</name>
    <dbReference type="NCBI Taxonomy" id="257310"/>
    <lineage>
        <taxon>Bacteria</taxon>
        <taxon>Pseudomonadati</taxon>
        <taxon>Pseudomonadota</taxon>
        <taxon>Betaproteobacteria</taxon>
        <taxon>Burkholderiales</taxon>
        <taxon>Alcaligenaceae</taxon>
        <taxon>Bordetella</taxon>
    </lineage>
</organism>
<accession>Q7WJ92</accession>
<protein>
    <recommendedName>
        <fullName evidence="1">Uridylate kinase</fullName>
        <shortName evidence="1">UK</shortName>
        <ecNumber evidence="1">2.7.4.22</ecNumber>
    </recommendedName>
    <alternativeName>
        <fullName evidence="1">Uridine monophosphate kinase</fullName>
        <shortName evidence="1">UMP kinase</shortName>
        <shortName evidence="1">UMPK</shortName>
    </alternativeName>
</protein>
<keyword id="KW-0067">ATP-binding</keyword>
<keyword id="KW-0963">Cytoplasm</keyword>
<keyword id="KW-0418">Kinase</keyword>
<keyword id="KW-0547">Nucleotide-binding</keyword>
<keyword id="KW-0665">Pyrimidine biosynthesis</keyword>
<keyword id="KW-0808">Transferase</keyword>
<sequence>MSSRSYKRVLLKLSGEALMGEDAFGINRSTIVRMTDEIAEVAALGVELAIVIGGGNIFRGVAPGAQGMDRATADYMGMMATIMNALALQDALKHKGVDTRVQSALNIDQVVEPYIRPKALRYLEEGKVVIFAAGTGNPFFTTDTAAALRGAEIGAEIVLKATKVDGIYSADPNKDPTATRYARISFDEAIVRRLEVMDATAFALCRDQKLPIKVFSINKSGALKRAVSGEDEGTLVHV</sequence>
<reference key="1">
    <citation type="journal article" date="2003" name="Nat. Genet.">
        <title>Comparative analysis of the genome sequences of Bordetella pertussis, Bordetella parapertussis and Bordetella bronchiseptica.</title>
        <authorList>
            <person name="Parkhill J."/>
            <person name="Sebaihia M."/>
            <person name="Preston A."/>
            <person name="Murphy L.D."/>
            <person name="Thomson N.R."/>
            <person name="Harris D.E."/>
            <person name="Holden M.T.G."/>
            <person name="Churcher C.M."/>
            <person name="Bentley S.D."/>
            <person name="Mungall K.L."/>
            <person name="Cerdeno-Tarraga A.-M."/>
            <person name="Temple L."/>
            <person name="James K.D."/>
            <person name="Harris B."/>
            <person name="Quail M.A."/>
            <person name="Achtman M."/>
            <person name="Atkin R."/>
            <person name="Baker S."/>
            <person name="Basham D."/>
            <person name="Bason N."/>
            <person name="Cherevach I."/>
            <person name="Chillingworth T."/>
            <person name="Collins M."/>
            <person name="Cronin A."/>
            <person name="Davis P."/>
            <person name="Doggett J."/>
            <person name="Feltwell T."/>
            <person name="Goble A."/>
            <person name="Hamlin N."/>
            <person name="Hauser H."/>
            <person name="Holroyd S."/>
            <person name="Jagels K."/>
            <person name="Leather S."/>
            <person name="Moule S."/>
            <person name="Norberczak H."/>
            <person name="O'Neil S."/>
            <person name="Ormond D."/>
            <person name="Price C."/>
            <person name="Rabbinowitsch E."/>
            <person name="Rutter S."/>
            <person name="Sanders M."/>
            <person name="Saunders D."/>
            <person name="Seeger K."/>
            <person name="Sharp S."/>
            <person name="Simmonds M."/>
            <person name="Skelton J."/>
            <person name="Squares R."/>
            <person name="Squares S."/>
            <person name="Stevens K."/>
            <person name="Unwin L."/>
            <person name="Whitehead S."/>
            <person name="Barrell B.G."/>
            <person name="Maskell D.J."/>
        </authorList>
    </citation>
    <scope>NUCLEOTIDE SEQUENCE [LARGE SCALE GENOMIC DNA]</scope>
    <source>
        <strain>ATCC BAA-588 / NCTC 13252 / RB50</strain>
    </source>
</reference>
<name>PYRH_BORBR</name>
<gene>
    <name evidence="1" type="primary">pyrH</name>
    <name type="synonym">smbA</name>
    <name type="ordered locus">BB2607</name>
</gene>
<dbReference type="EC" id="2.7.4.22" evidence="1"/>
<dbReference type="EMBL" id="BX640444">
    <property type="protein sequence ID" value="CAE33100.1"/>
    <property type="status" value="ALT_INIT"/>
    <property type="molecule type" value="Genomic_DNA"/>
</dbReference>
<dbReference type="RefSeq" id="WP_010926571.1">
    <property type="nucleotide sequence ID" value="NC_002927.3"/>
</dbReference>
<dbReference type="SMR" id="Q7WJ92"/>
<dbReference type="GeneID" id="56478719"/>
<dbReference type="KEGG" id="bbr:BB2607"/>
<dbReference type="eggNOG" id="COG0528">
    <property type="taxonomic scope" value="Bacteria"/>
</dbReference>
<dbReference type="HOGENOM" id="CLU_033861_0_0_4"/>
<dbReference type="UniPathway" id="UPA00159">
    <property type="reaction ID" value="UER00275"/>
</dbReference>
<dbReference type="Proteomes" id="UP000001027">
    <property type="component" value="Chromosome"/>
</dbReference>
<dbReference type="GO" id="GO:0005829">
    <property type="term" value="C:cytosol"/>
    <property type="evidence" value="ECO:0007669"/>
    <property type="project" value="TreeGrafter"/>
</dbReference>
<dbReference type="GO" id="GO:0005524">
    <property type="term" value="F:ATP binding"/>
    <property type="evidence" value="ECO:0007669"/>
    <property type="project" value="UniProtKB-KW"/>
</dbReference>
<dbReference type="GO" id="GO:0033862">
    <property type="term" value="F:UMP kinase activity"/>
    <property type="evidence" value="ECO:0007669"/>
    <property type="project" value="UniProtKB-EC"/>
</dbReference>
<dbReference type="GO" id="GO:0044210">
    <property type="term" value="P:'de novo' CTP biosynthetic process"/>
    <property type="evidence" value="ECO:0007669"/>
    <property type="project" value="UniProtKB-UniRule"/>
</dbReference>
<dbReference type="GO" id="GO:0006225">
    <property type="term" value="P:UDP biosynthetic process"/>
    <property type="evidence" value="ECO:0007669"/>
    <property type="project" value="TreeGrafter"/>
</dbReference>
<dbReference type="CDD" id="cd04254">
    <property type="entry name" value="AAK_UMPK-PyrH-Ec"/>
    <property type="match status" value="1"/>
</dbReference>
<dbReference type="FunFam" id="3.40.1160.10:FF:000001">
    <property type="entry name" value="Uridylate kinase"/>
    <property type="match status" value="1"/>
</dbReference>
<dbReference type="Gene3D" id="3.40.1160.10">
    <property type="entry name" value="Acetylglutamate kinase-like"/>
    <property type="match status" value="1"/>
</dbReference>
<dbReference type="HAMAP" id="MF_01220_B">
    <property type="entry name" value="PyrH_B"/>
    <property type="match status" value="1"/>
</dbReference>
<dbReference type="InterPro" id="IPR036393">
    <property type="entry name" value="AceGlu_kinase-like_sf"/>
</dbReference>
<dbReference type="InterPro" id="IPR001048">
    <property type="entry name" value="Asp/Glu/Uridylate_kinase"/>
</dbReference>
<dbReference type="InterPro" id="IPR011817">
    <property type="entry name" value="Uridylate_kinase"/>
</dbReference>
<dbReference type="InterPro" id="IPR015963">
    <property type="entry name" value="Uridylate_kinase_bac"/>
</dbReference>
<dbReference type="NCBIfam" id="TIGR02075">
    <property type="entry name" value="pyrH_bact"/>
    <property type="match status" value="1"/>
</dbReference>
<dbReference type="PANTHER" id="PTHR42833">
    <property type="entry name" value="URIDYLATE KINASE"/>
    <property type="match status" value="1"/>
</dbReference>
<dbReference type="PANTHER" id="PTHR42833:SF4">
    <property type="entry name" value="URIDYLATE KINASE PUMPKIN, CHLOROPLASTIC"/>
    <property type="match status" value="1"/>
</dbReference>
<dbReference type="Pfam" id="PF00696">
    <property type="entry name" value="AA_kinase"/>
    <property type="match status" value="1"/>
</dbReference>
<dbReference type="PIRSF" id="PIRSF005650">
    <property type="entry name" value="Uridylate_kin"/>
    <property type="match status" value="1"/>
</dbReference>
<dbReference type="SUPFAM" id="SSF53633">
    <property type="entry name" value="Carbamate kinase-like"/>
    <property type="match status" value="1"/>
</dbReference>
<feature type="chain" id="PRO_0000323798" description="Uridylate kinase">
    <location>
        <begin position="1"/>
        <end position="238"/>
    </location>
</feature>
<feature type="binding site" evidence="1">
    <location>
        <begin position="12"/>
        <end position="15"/>
    </location>
    <ligand>
        <name>ATP</name>
        <dbReference type="ChEBI" id="CHEBI:30616"/>
    </ligand>
</feature>
<feature type="binding site" evidence="1">
    <location>
        <position position="54"/>
    </location>
    <ligand>
        <name>UMP</name>
        <dbReference type="ChEBI" id="CHEBI:57865"/>
    </ligand>
</feature>
<feature type="binding site" evidence="1">
    <location>
        <position position="55"/>
    </location>
    <ligand>
        <name>ATP</name>
        <dbReference type="ChEBI" id="CHEBI:30616"/>
    </ligand>
</feature>
<feature type="binding site" evidence="1">
    <location>
        <position position="59"/>
    </location>
    <ligand>
        <name>ATP</name>
        <dbReference type="ChEBI" id="CHEBI:30616"/>
    </ligand>
</feature>
<feature type="binding site" evidence="1">
    <location>
        <position position="74"/>
    </location>
    <ligand>
        <name>UMP</name>
        <dbReference type="ChEBI" id="CHEBI:57865"/>
    </ligand>
</feature>
<feature type="binding site" evidence="1">
    <location>
        <begin position="135"/>
        <end position="142"/>
    </location>
    <ligand>
        <name>UMP</name>
        <dbReference type="ChEBI" id="CHEBI:57865"/>
    </ligand>
</feature>
<feature type="binding site" evidence="1">
    <location>
        <position position="162"/>
    </location>
    <ligand>
        <name>ATP</name>
        <dbReference type="ChEBI" id="CHEBI:30616"/>
    </ligand>
</feature>
<feature type="binding site" evidence="1">
    <location>
        <position position="168"/>
    </location>
    <ligand>
        <name>ATP</name>
        <dbReference type="ChEBI" id="CHEBI:30616"/>
    </ligand>
</feature>
<feature type="binding site" evidence="1">
    <location>
        <position position="171"/>
    </location>
    <ligand>
        <name>ATP</name>
        <dbReference type="ChEBI" id="CHEBI:30616"/>
    </ligand>
</feature>
<evidence type="ECO:0000255" key="1">
    <source>
        <dbReference type="HAMAP-Rule" id="MF_01220"/>
    </source>
</evidence>
<evidence type="ECO:0000305" key="2"/>
<comment type="function">
    <text evidence="1">Catalyzes the reversible phosphorylation of UMP to UDP.</text>
</comment>
<comment type="catalytic activity">
    <reaction evidence="1">
        <text>UMP + ATP = UDP + ADP</text>
        <dbReference type="Rhea" id="RHEA:24400"/>
        <dbReference type="ChEBI" id="CHEBI:30616"/>
        <dbReference type="ChEBI" id="CHEBI:57865"/>
        <dbReference type="ChEBI" id="CHEBI:58223"/>
        <dbReference type="ChEBI" id="CHEBI:456216"/>
        <dbReference type="EC" id="2.7.4.22"/>
    </reaction>
</comment>
<comment type="activity regulation">
    <text evidence="1">Inhibited by UTP.</text>
</comment>
<comment type="pathway">
    <text evidence="1">Pyrimidine metabolism; CTP biosynthesis via de novo pathway; UDP from UMP (UMPK route): step 1/1.</text>
</comment>
<comment type="subunit">
    <text evidence="1">Homohexamer.</text>
</comment>
<comment type="subcellular location">
    <subcellularLocation>
        <location evidence="1">Cytoplasm</location>
    </subcellularLocation>
</comment>
<comment type="similarity">
    <text evidence="1">Belongs to the UMP kinase family.</text>
</comment>
<comment type="sequence caution" evidence="2">
    <conflict type="erroneous initiation">
        <sequence resource="EMBL-CDS" id="CAE33100"/>
    </conflict>
</comment>
<proteinExistence type="inferred from homology"/>